<protein>
    <recommendedName>
        <fullName evidence="5">Ergosteryl-beta-glucosidase</fullName>
        <ecNumber evidence="4">3.2.1.-</ecNumber>
    </recommendedName>
</protein>
<feature type="chain" id="PRO_0000184056" description="Ergosteryl-beta-glucosidase">
    <location>
        <begin position="1"/>
        <end position="764"/>
    </location>
</feature>
<feature type="region of interest" description="Disordered" evidence="2">
    <location>
        <begin position="588"/>
        <end position="629"/>
    </location>
</feature>
<feature type="compositionally biased region" description="Low complexity" evidence="2">
    <location>
        <begin position="601"/>
        <end position="622"/>
    </location>
</feature>
<feature type="active site" description="Nucleophile" evidence="1">
    <location>
        <position position="515"/>
    </location>
</feature>
<feature type="modified residue" description="Phosphothreonine" evidence="7">
    <location>
        <position position="594"/>
    </location>
</feature>
<accession>P40566</accession>
<accession>D6VVT7</accession>
<name>EGH1_YEAST</name>
<comment type="function">
    <text evidence="4">Ergosteryl beta-glucosidase involved in the ergosteryl beta-glucoside (EG) catabolic pathway and vacuole formation via hydrolysis of EG to generate glucose (PubMed:26116408). Is also able to hydrolyze cholesteryl beta-glucoside and sitosteryl beta-glucoside to generate glucose; and C6-7-nitro-2,1,3-benzoxadiazole (NBD)-GlcCer to generate C6-NBD-ceramide (Cer) (PubMed:26116408).</text>
</comment>
<comment type="catalytic activity">
    <reaction evidence="4">
        <text>ergosteryl 3-beta-D-glucoside + H2O = ergosterol + D-glucose</text>
        <dbReference type="Rhea" id="RHEA:24640"/>
        <dbReference type="ChEBI" id="CHEBI:4167"/>
        <dbReference type="ChEBI" id="CHEBI:15377"/>
        <dbReference type="ChEBI" id="CHEBI:16933"/>
        <dbReference type="ChEBI" id="CHEBI:52973"/>
    </reaction>
</comment>
<comment type="subcellular location">
    <subcellularLocation>
        <location evidence="4">Cytoplasm</location>
        <location evidence="4">Cytosol</location>
    </subcellularLocation>
    <subcellularLocation>
        <location evidence="4">Vacuole membrane</location>
        <topology evidence="4">Peripheral membrane protein</topology>
    </subcellularLocation>
    <text evidence="4">Localizes in the cytosol until the initial logarithmic phase, then targets to a yet unidentified organelle with a granule structure in the middle logarithmic phase, and finally localizes at the vacuole membranes in the stationary phase.</text>
</comment>
<comment type="disruption phenotype">
    <text evidence="4">Resulted in the accumulation of ergosteryl beta-glucoside (EG) and fragmentation of vacuoles.</text>
</comment>
<comment type="miscellaneous">
    <text evidence="3">Present with 1070 molecules/cell in log phase SD medium.</text>
</comment>
<comment type="similarity">
    <text evidence="6">Belongs to the glycosyl hydrolase 5 (cellulase A) family.</text>
</comment>
<evidence type="ECO:0000250" key="1">
    <source>
        <dbReference type="UniProtKB" id="Q99036"/>
    </source>
</evidence>
<evidence type="ECO:0000256" key="2">
    <source>
        <dbReference type="SAM" id="MobiDB-lite"/>
    </source>
</evidence>
<evidence type="ECO:0000269" key="3">
    <source>
    </source>
</evidence>
<evidence type="ECO:0000269" key="4">
    <source>
    </source>
</evidence>
<evidence type="ECO:0000303" key="5">
    <source>
    </source>
</evidence>
<evidence type="ECO:0000305" key="6"/>
<evidence type="ECO:0007744" key="7">
    <source>
    </source>
</evidence>
<dbReference type="EC" id="3.2.1.-" evidence="4"/>
<dbReference type="EMBL" id="X79743">
    <property type="status" value="NOT_ANNOTATED_CDS"/>
    <property type="molecule type" value="Genomic_DNA"/>
</dbReference>
<dbReference type="EMBL" id="Z37996">
    <property type="protein sequence ID" value="CAA86077.1"/>
    <property type="molecule type" value="Genomic_DNA"/>
</dbReference>
<dbReference type="EMBL" id="Z38062">
    <property type="protein sequence ID" value="CAA86209.1"/>
    <property type="molecule type" value="Genomic_DNA"/>
</dbReference>
<dbReference type="EMBL" id="BK006942">
    <property type="protein sequence ID" value="DAA08553.1"/>
    <property type="molecule type" value="Genomic_DNA"/>
</dbReference>
<dbReference type="PIR" id="S50878">
    <property type="entry name" value="S50878"/>
</dbReference>
<dbReference type="RefSeq" id="NP_012272.3">
    <property type="nucleotide sequence ID" value="NM_001179529.3"/>
</dbReference>
<dbReference type="SMR" id="P40566"/>
<dbReference type="BioGRID" id="34999">
    <property type="interactions" value="62"/>
</dbReference>
<dbReference type="FunCoup" id="P40566">
    <property type="interactions" value="53"/>
</dbReference>
<dbReference type="IntAct" id="P40566">
    <property type="interactions" value="2"/>
</dbReference>
<dbReference type="MINT" id="P40566"/>
<dbReference type="STRING" id="4932.YIR007W"/>
<dbReference type="CAZy" id="GH5">
    <property type="family name" value="Glycoside Hydrolase Family 5"/>
</dbReference>
<dbReference type="GlyGen" id="P40566">
    <property type="glycosylation" value="1 site"/>
</dbReference>
<dbReference type="iPTMnet" id="P40566"/>
<dbReference type="PaxDb" id="4932-YIR007W"/>
<dbReference type="PeptideAtlas" id="P40566"/>
<dbReference type="EnsemblFungi" id="YIR007W_mRNA">
    <property type="protein sequence ID" value="YIR007W"/>
    <property type="gene ID" value="YIR007W"/>
</dbReference>
<dbReference type="GeneID" id="854824"/>
<dbReference type="KEGG" id="sce:YIR007W"/>
<dbReference type="AGR" id="SGD:S000001446"/>
<dbReference type="SGD" id="S000001446">
    <property type="gene designation" value="EGH1"/>
</dbReference>
<dbReference type="VEuPathDB" id="FungiDB:YIR007W"/>
<dbReference type="eggNOG" id="ENOG502QPU8">
    <property type="taxonomic scope" value="Eukaryota"/>
</dbReference>
<dbReference type="HOGENOM" id="CLU_009024_0_1_1"/>
<dbReference type="InParanoid" id="P40566"/>
<dbReference type="OMA" id="AACRYFA"/>
<dbReference type="OrthoDB" id="9971853at2759"/>
<dbReference type="BioCyc" id="MetaCyc:G3O-31428-MONOMER"/>
<dbReference type="BioCyc" id="YEAST:G3O-31428-MONOMER"/>
<dbReference type="BRENDA" id="3.2.1.104">
    <property type="organism ID" value="984"/>
</dbReference>
<dbReference type="BioGRID-ORCS" id="854824">
    <property type="hits" value="0 hits in 10 CRISPR screens"/>
</dbReference>
<dbReference type="PRO" id="PR:P40566"/>
<dbReference type="Proteomes" id="UP000002311">
    <property type="component" value="Chromosome IX"/>
</dbReference>
<dbReference type="RNAct" id="P40566">
    <property type="molecule type" value="protein"/>
</dbReference>
<dbReference type="GO" id="GO:0005737">
    <property type="term" value="C:cytoplasm"/>
    <property type="evidence" value="ECO:0007005"/>
    <property type="project" value="SGD"/>
</dbReference>
<dbReference type="GO" id="GO:0005829">
    <property type="term" value="C:cytosol"/>
    <property type="evidence" value="ECO:0000314"/>
    <property type="project" value="SGD"/>
</dbReference>
<dbReference type="GO" id="GO:0000329">
    <property type="term" value="C:fungal-type vacuole membrane"/>
    <property type="evidence" value="ECO:0007005"/>
    <property type="project" value="SGD"/>
</dbReference>
<dbReference type="GO" id="GO:0050295">
    <property type="term" value="F:steryl-beta-glucosidase activity"/>
    <property type="evidence" value="ECO:0000314"/>
    <property type="project" value="SGD"/>
</dbReference>
<dbReference type="GO" id="GO:1904462">
    <property type="term" value="P:ergosteryl 3-beta-D-glucoside catabolic process"/>
    <property type="evidence" value="ECO:0000315"/>
    <property type="project" value="SGD"/>
</dbReference>
<dbReference type="GO" id="GO:0000272">
    <property type="term" value="P:polysaccharide catabolic process"/>
    <property type="evidence" value="ECO:0007669"/>
    <property type="project" value="InterPro"/>
</dbReference>
<dbReference type="FunFam" id="3.20.20.80:FF:000122">
    <property type="entry name" value="Glycoside hydrolase"/>
    <property type="match status" value="1"/>
</dbReference>
<dbReference type="FunFam" id="3.20.20.80:FF:000174">
    <property type="entry name" value="YIR007W-like protein"/>
    <property type="match status" value="1"/>
</dbReference>
<dbReference type="Gene3D" id="3.20.20.80">
    <property type="entry name" value="Glycosidases"/>
    <property type="match status" value="2"/>
</dbReference>
<dbReference type="Gene3D" id="2.60.40.1180">
    <property type="entry name" value="Golgi alpha-mannosidase II"/>
    <property type="match status" value="1"/>
</dbReference>
<dbReference type="InterPro" id="IPR041036">
    <property type="entry name" value="GH5_C"/>
</dbReference>
<dbReference type="InterPro" id="IPR001547">
    <property type="entry name" value="Glyco_hydro_5"/>
</dbReference>
<dbReference type="InterPro" id="IPR018087">
    <property type="entry name" value="Glyco_hydro_5_CS"/>
</dbReference>
<dbReference type="InterPro" id="IPR013780">
    <property type="entry name" value="Glyco_hydro_b"/>
</dbReference>
<dbReference type="InterPro" id="IPR017853">
    <property type="entry name" value="Glycoside_hydrolase_SF"/>
</dbReference>
<dbReference type="InterPro" id="IPR052066">
    <property type="entry name" value="Glycosphingolipid_Hydrolases"/>
</dbReference>
<dbReference type="PANTHER" id="PTHR31308">
    <property type="match status" value="1"/>
</dbReference>
<dbReference type="PANTHER" id="PTHR31308:SF5">
    <property type="entry name" value="ERGOSTERYL-BETA-GLUCOSIDASE"/>
    <property type="match status" value="1"/>
</dbReference>
<dbReference type="Pfam" id="PF00150">
    <property type="entry name" value="Cellulase"/>
    <property type="match status" value="1"/>
</dbReference>
<dbReference type="Pfam" id="PF18564">
    <property type="entry name" value="Glyco_hydro_5_C"/>
    <property type="match status" value="1"/>
</dbReference>
<dbReference type="SUPFAM" id="SSF51445">
    <property type="entry name" value="(Trans)glycosidases"/>
    <property type="match status" value="1"/>
</dbReference>
<dbReference type="PROSITE" id="PS00659">
    <property type="entry name" value="GLYCOSYL_HYDROL_F5"/>
    <property type="match status" value="1"/>
</dbReference>
<keyword id="KW-0963">Cytoplasm</keyword>
<keyword id="KW-0326">Glycosidase</keyword>
<keyword id="KW-0378">Hydrolase</keyword>
<keyword id="KW-0472">Membrane</keyword>
<keyword id="KW-0597">Phosphoprotein</keyword>
<keyword id="KW-1185">Reference proteome</keyword>
<keyword id="KW-0926">Vacuole</keyword>
<proteinExistence type="evidence at protein level"/>
<gene>
    <name evidence="5" type="primary">EGH1</name>
    <name type="ordered locus">YIR007W</name>
    <name type="ORF">YIB7W</name>
</gene>
<sequence length="764" mass="86979">MPAKIHISADGQFCDKDGNEIQLRGVNLDPSVKIPAKPFLSTHAPIENDTFFEDADKVSFINHPLVLDDIEQHIIRLKSLGYNTIRLPFTWESLEHAGPGQYDFDYMDYIVEVLTRINSVQQGMYIYLDPHQDVWSRFSGGSGAPLWTLYCAGFQPANFLATDAAILHNYYIDPKTGREVGKDEESYPKMVWPTNYFKLACQTMFTLFFGGKQYAPKCTINGENIQDYLQGRFNDAIMTLCARIKEKAPELFESNCIIGLESMNEPNCGYIGETNLDVIPKERNLKLGKTPTAFQSFMLGEGIECTIDQYKRTFFGFSKGKPCTINPKGKKAWLSAEERDAIDAKYNWERNPEWKPDTCIWKLHGVWEIQNGKRPVLLKPNYFSQPDATVFINNHFVDYYTGIYNKFREFDQELFIIIQPPVMKPPPNLQNSKILDNRTICACHFYDGMTLMYKTWNKRIGIDTYGLVNKKYSNPAFAVVLGENNIRKCIRKQLSEMQKDAKSMLGKKVPVFFTEIGIPFDMDDKKAYITNDYSSQTAALDALGFALEGSNLSYTLWCYCSINSHIWGDNWNNEDFSIWSPDDKPLYHDTRAKTPTPEPSPASTVASVSTSTSKSGSSQPPSFIKPDNHLDLDSPSCTLKSDLSGFRALDAIMRPFPIQIHGRFEFAEFNLCNKSYLLKLVGKTTPEQITVPTYIFIPRHHFTPSRLSIRSSSGHYTYNTDYQVLEWFHEPGHQFIEICAKSKSRPNTPGSDTSNDLPAECVIS</sequence>
<organism>
    <name type="scientific">Saccharomyces cerevisiae (strain ATCC 204508 / S288c)</name>
    <name type="common">Baker's yeast</name>
    <dbReference type="NCBI Taxonomy" id="559292"/>
    <lineage>
        <taxon>Eukaryota</taxon>
        <taxon>Fungi</taxon>
        <taxon>Dikarya</taxon>
        <taxon>Ascomycota</taxon>
        <taxon>Saccharomycotina</taxon>
        <taxon>Saccharomycetes</taxon>
        <taxon>Saccharomycetales</taxon>
        <taxon>Saccharomycetaceae</taxon>
        <taxon>Saccharomyces</taxon>
    </lineage>
</organism>
<reference key="1">
    <citation type="journal article" date="1995" name="Yeast">
        <title>Nucleotide sequence and analysis of the centromeric region of yeast chromosome IX.</title>
        <authorList>
            <person name="Voss H."/>
            <person name="Tamames J."/>
            <person name="Teodoru C."/>
            <person name="Valencia A."/>
            <person name="Sensen C."/>
            <person name="Wiemann S."/>
            <person name="Schwager C."/>
            <person name="Zimmermann J."/>
            <person name="Sander C."/>
            <person name="Ansorge W."/>
        </authorList>
    </citation>
    <scope>NUCLEOTIDE SEQUENCE [GENOMIC DNA]</scope>
    <source>
        <strain>ATCC 204508 / S288c</strain>
    </source>
</reference>
<reference key="2">
    <citation type="journal article" date="1997" name="Nature">
        <title>The nucleotide sequence of Saccharomyces cerevisiae chromosome IX.</title>
        <authorList>
            <person name="Churcher C.M."/>
            <person name="Bowman S."/>
            <person name="Badcock K."/>
            <person name="Bankier A.T."/>
            <person name="Brown D."/>
            <person name="Chillingworth T."/>
            <person name="Connor R."/>
            <person name="Devlin K."/>
            <person name="Gentles S."/>
            <person name="Hamlin N."/>
            <person name="Harris D.E."/>
            <person name="Horsnell T."/>
            <person name="Hunt S."/>
            <person name="Jagels K."/>
            <person name="Jones M."/>
            <person name="Lye G."/>
            <person name="Moule S."/>
            <person name="Odell C."/>
            <person name="Pearson D."/>
            <person name="Rajandream M.A."/>
            <person name="Rice P."/>
            <person name="Rowley N."/>
            <person name="Skelton J."/>
            <person name="Smith V."/>
            <person name="Walsh S.V."/>
            <person name="Whitehead S."/>
            <person name="Barrell B.G."/>
        </authorList>
    </citation>
    <scope>NUCLEOTIDE SEQUENCE [LARGE SCALE GENOMIC DNA]</scope>
    <source>
        <strain>ATCC 204508 / S288c</strain>
    </source>
</reference>
<reference key="3">
    <citation type="journal article" date="2014" name="G3 (Bethesda)">
        <title>The reference genome sequence of Saccharomyces cerevisiae: Then and now.</title>
        <authorList>
            <person name="Engel S.R."/>
            <person name="Dietrich F.S."/>
            <person name="Fisk D.G."/>
            <person name="Binkley G."/>
            <person name="Balakrishnan R."/>
            <person name="Costanzo M.C."/>
            <person name="Dwight S.S."/>
            <person name="Hitz B.C."/>
            <person name="Karra K."/>
            <person name="Nash R.S."/>
            <person name="Weng S."/>
            <person name="Wong E.D."/>
            <person name="Lloyd P."/>
            <person name="Skrzypek M.S."/>
            <person name="Miyasato S.R."/>
            <person name="Simison M."/>
            <person name="Cherry J.M."/>
        </authorList>
    </citation>
    <scope>GENOME REANNOTATION</scope>
    <source>
        <strain>ATCC 204508 / S288c</strain>
    </source>
</reference>
<reference key="4">
    <citation type="journal article" date="2003" name="Nature">
        <title>Global analysis of protein expression in yeast.</title>
        <authorList>
            <person name="Ghaemmaghami S."/>
            <person name="Huh W.-K."/>
            <person name="Bower K."/>
            <person name="Howson R.W."/>
            <person name="Belle A."/>
            <person name="Dephoure N."/>
            <person name="O'Shea E.K."/>
            <person name="Weissman J.S."/>
        </authorList>
    </citation>
    <scope>LEVEL OF PROTEIN EXPRESSION [LARGE SCALE ANALYSIS]</scope>
</reference>
<reference key="5">
    <citation type="journal article" date="2009" name="Science">
        <title>Global analysis of Cdk1 substrate phosphorylation sites provides insights into evolution.</title>
        <authorList>
            <person name="Holt L.J."/>
            <person name="Tuch B.B."/>
            <person name="Villen J."/>
            <person name="Johnson A.D."/>
            <person name="Gygi S.P."/>
            <person name="Morgan D.O."/>
        </authorList>
    </citation>
    <scope>PHOSPHORYLATION [LARGE SCALE ANALYSIS] AT THR-594</scope>
    <scope>IDENTIFICATION BY MASS SPECTROMETRY [LARGE SCALE ANALYSIS]</scope>
</reference>
<reference key="6">
    <citation type="journal article" date="2015" name="Glycobiology">
        <title>Ergosteryl-beta-glucosidase (Egh1) involved in sterylglucoside catabolism and vacuole formation in Saccharomyces cerevisiae.</title>
        <authorList>
            <person name="Watanabe T."/>
            <person name="Tani M."/>
            <person name="Ishibashi Y."/>
            <person name="Endo I."/>
            <person name="Okino N."/>
            <person name="Ito M."/>
        </authorList>
    </citation>
    <scope>FUNCTION</scope>
    <scope>DISRUPTION PHENOTYPE</scope>
    <scope>CATALYTIC ACTIVITY</scope>
    <scope>SUBCELLULAR LOCATION</scope>
</reference>